<gene>
    <name evidence="1" type="primary">atpC</name>
    <name type="ordered locus">ECIAI39_4335</name>
</gene>
<feature type="chain" id="PRO_1000127851" description="ATP synthase epsilon chain">
    <location>
        <begin position="1"/>
        <end position="139"/>
    </location>
</feature>
<keyword id="KW-0066">ATP synthesis</keyword>
<keyword id="KW-0997">Cell inner membrane</keyword>
<keyword id="KW-1003">Cell membrane</keyword>
<keyword id="KW-0139">CF(1)</keyword>
<keyword id="KW-0375">Hydrogen ion transport</keyword>
<keyword id="KW-0406">Ion transport</keyword>
<keyword id="KW-0472">Membrane</keyword>
<keyword id="KW-0813">Transport</keyword>
<dbReference type="EMBL" id="CU928164">
    <property type="protein sequence ID" value="CAR20441.1"/>
    <property type="molecule type" value="Genomic_DNA"/>
</dbReference>
<dbReference type="RefSeq" id="WP_001251965.1">
    <property type="nucleotide sequence ID" value="NC_011750.1"/>
</dbReference>
<dbReference type="RefSeq" id="YP_002410210.1">
    <property type="nucleotide sequence ID" value="NC_011750.1"/>
</dbReference>
<dbReference type="SMR" id="B7NR33"/>
<dbReference type="STRING" id="585057.ECIAI39_4335"/>
<dbReference type="KEGG" id="ect:ECIAI39_4335"/>
<dbReference type="PATRIC" id="fig|585057.6.peg.4480"/>
<dbReference type="HOGENOM" id="CLU_084338_2_0_6"/>
<dbReference type="Proteomes" id="UP000000749">
    <property type="component" value="Chromosome"/>
</dbReference>
<dbReference type="GO" id="GO:0005886">
    <property type="term" value="C:plasma membrane"/>
    <property type="evidence" value="ECO:0007669"/>
    <property type="project" value="UniProtKB-SubCell"/>
</dbReference>
<dbReference type="GO" id="GO:0045259">
    <property type="term" value="C:proton-transporting ATP synthase complex"/>
    <property type="evidence" value="ECO:0007669"/>
    <property type="project" value="UniProtKB-KW"/>
</dbReference>
<dbReference type="GO" id="GO:0005524">
    <property type="term" value="F:ATP binding"/>
    <property type="evidence" value="ECO:0007669"/>
    <property type="project" value="UniProtKB-UniRule"/>
</dbReference>
<dbReference type="GO" id="GO:0046933">
    <property type="term" value="F:proton-transporting ATP synthase activity, rotational mechanism"/>
    <property type="evidence" value="ECO:0007669"/>
    <property type="project" value="UniProtKB-UniRule"/>
</dbReference>
<dbReference type="CDD" id="cd12152">
    <property type="entry name" value="F1-ATPase_delta"/>
    <property type="match status" value="1"/>
</dbReference>
<dbReference type="FunFam" id="1.20.5.440:FF:000001">
    <property type="entry name" value="ATP synthase epsilon chain"/>
    <property type="match status" value="1"/>
</dbReference>
<dbReference type="FunFam" id="2.60.15.10:FF:000001">
    <property type="entry name" value="ATP synthase epsilon chain"/>
    <property type="match status" value="1"/>
</dbReference>
<dbReference type="Gene3D" id="1.20.5.440">
    <property type="entry name" value="ATP synthase delta/epsilon subunit, C-terminal domain"/>
    <property type="match status" value="1"/>
</dbReference>
<dbReference type="Gene3D" id="2.60.15.10">
    <property type="entry name" value="F0F1 ATP synthase delta/epsilon subunit, N-terminal"/>
    <property type="match status" value="1"/>
</dbReference>
<dbReference type="HAMAP" id="MF_00530">
    <property type="entry name" value="ATP_synth_epsil_bac"/>
    <property type="match status" value="1"/>
</dbReference>
<dbReference type="InterPro" id="IPR036794">
    <property type="entry name" value="ATP_F1_dsu/esu_C_sf"/>
</dbReference>
<dbReference type="InterPro" id="IPR001469">
    <property type="entry name" value="ATP_synth_F1_dsu/esu"/>
</dbReference>
<dbReference type="InterPro" id="IPR020546">
    <property type="entry name" value="ATP_synth_F1_dsu/esu_N"/>
</dbReference>
<dbReference type="InterPro" id="IPR020547">
    <property type="entry name" value="ATP_synth_F1_esu_C"/>
</dbReference>
<dbReference type="InterPro" id="IPR036771">
    <property type="entry name" value="ATPsynth_dsu/esu_N"/>
</dbReference>
<dbReference type="NCBIfam" id="TIGR01216">
    <property type="entry name" value="ATP_synt_epsi"/>
    <property type="match status" value="1"/>
</dbReference>
<dbReference type="NCBIfam" id="NF001847">
    <property type="entry name" value="PRK00571.1-4"/>
    <property type="match status" value="1"/>
</dbReference>
<dbReference type="PANTHER" id="PTHR13822">
    <property type="entry name" value="ATP SYNTHASE DELTA/EPSILON CHAIN"/>
    <property type="match status" value="1"/>
</dbReference>
<dbReference type="PANTHER" id="PTHR13822:SF10">
    <property type="entry name" value="ATP SYNTHASE EPSILON CHAIN, CHLOROPLASTIC"/>
    <property type="match status" value="1"/>
</dbReference>
<dbReference type="Pfam" id="PF00401">
    <property type="entry name" value="ATP-synt_DE"/>
    <property type="match status" value="1"/>
</dbReference>
<dbReference type="Pfam" id="PF02823">
    <property type="entry name" value="ATP-synt_DE_N"/>
    <property type="match status" value="1"/>
</dbReference>
<dbReference type="SUPFAM" id="SSF46604">
    <property type="entry name" value="Epsilon subunit of F1F0-ATP synthase C-terminal domain"/>
    <property type="match status" value="1"/>
</dbReference>
<dbReference type="SUPFAM" id="SSF51344">
    <property type="entry name" value="Epsilon subunit of F1F0-ATP synthase N-terminal domain"/>
    <property type="match status" value="1"/>
</dbReference>
<comment type="function">
    <text evidence="1">Produces ATP from ADP in the presence of a proton gradient across the membrane.</text>
</comment>
<comment type="subunit">
    <text evidence="1">F-type ATPases have 2 components, CF(1) - the catalytic core - and CF(0) - the membrane proton channel. CF(1) has five subunits: alpha(3), beta(3), gamma(1), delta(1), epsilon(1). CF(0) has three main subunits: a, b and c.</text>
</comment>
<comment type="subcellular location">
    <subcellularLocation>
        <location evidence="1">Cell inner membrane</location>
        <topology evidence="1">Peripheral membrane protein</topology>
    </subcellularLocation>
</comment>
<comment type="similarity">
    <text evidence="1">Belongs to the ATPase epsilon chain family.</text>
</comment>
<organism>
    <name type="scientific">Escherichia coli O7:K1 (strain IAI39 / ExPEC)</name>
    <dbReference type="NCBI Taxonomy" id="585057"/>
    <lineage>
        <taxon>Bacteria</taxon>
        <taxon>Pseudomonadati</taxon>
        <taxon>Pseudomonadota</taxon>
        <taxon>Gammaproteobacteria</taxon>
        <taxon>Enterobacterales</taxon>
        <taxon>Enterobacteriaceae</taxon>
        <taxon>Escherichia</taxon>
    </lineage>
</organism>
<proteinExistence type="inferred from homology"/>
<evidence type="ECO:0000255" key="1">
    <source>
        <dbReference type="HAMAP-Rule" id="MF_00530"/>
    </source>
</evidence>
<sequence length="139" mass="15068">MAMTYHLDVVSAEQQMFSGLVEKIQVTGSEGELGIYPGHAPLLTAIKPGMIRIVKQHGHEEFIYLSGGILEVQPGNVTVLADTAIRGQDLDEARAMEAKRKAEEHISSSHGDVDYAQASAELAKAIAQLRVIELTKKAM</sequence>
<name>ATPE_ECO7I</name>
<reference key="1">
    <citation type="journal article" date="2009" name="PLoS Genet.">
        <title>Organised genome dynamics in the Escherichia coli species results in highly diverse adaptive paths.</title>
        <authorList>
            <person name="Touchon M."/>
            <person name="Hoede C."/>
            <person name="Tenaillon O."/>
            <person name="Barbe V."/>
            <person name="Baeriswyl S."/>
            <person name="Bidet P."/>
            <person name="Bingen E."/>
            <person name="Bonacorsi S."/>
            <person name="Bouchier C."/>
            <person name="Bouvet O."/>
            <person name="Calteau A."/>
            <person name="Chiapello H."/>
            <person name="Clermont O."/>
            <person name="Cruveiller S."/>
            <person name="Danchin A."/>
            <person name="Diard M."/>
            <person name="Dossat C."/>
            <person name="Karoui M.E."/>
            <person name="Frapy E."/>
            <person name="Garry L."/>
            <person name="Ghigo J.M."/>
            <person name="Gilles A.M."/>
            <person name="Johnson J."/>
            <person name="Le Bouguenec C."/>
            <person name="Lescat M."/>
            <person name="Mangenot S."/>
            <person name="Martinez-Jehanne V."/>
            <person name="Matic I."/>
            <person name="Nassif X."/>
            <person name="Oztas S."/>
            <person name="Petit M.A."/>
            <person name="Pichon C."/>
            <person name="Rouy Z."/>
            <person name="Ruf C.S."/>
            <person name="Schneider D."/>
            <person name="Tourret J."/>
            <person name="Vacherie B."/>
            <person name="Vallenet D."/>
            <person name="Medigue C."/>
            <person name="Rocha E.P.C."/>
            <person name="Denamur E."/>
        </authorList>
    </citation>
    <scope>NUCLEOTIDE SEQUENCE [LARGE SCALE GENOMIC DNA]</scope>
    <source>
        <strain>IAI39 / ExPEC</strain>
    </source>
</reference>
<protein>
    <recommendedName>
        <fullName evidence="1">ATP synthase epsilon chain</fullName>
    </recommendedName>
    <alternativeName>
        <fullName evidence="1">ATP synthase F1 sector epsilon subunit</fullName>
    </alternativeName>
    <alternativeName>
        <fullName evidence="1">F-ATPase epsilon subunit</fullName>
    </alternativeName>
</protein>
<accession>B7NR33</accession>